<evidence type="ECO:0000255" key="1">
    <source>
        <dbReference type="HAMAP-Rule" id="MF_01077"/>
    </source>
</evidence>
<feature type="chain" id="PRO_1000136723" description="Ribosome maturation factor RimP">
    <location>
        <begin position="1"/>
        <end position="174"/>
    </location>
</feature>
<accession>B2I2M5</accession>
<organism>
    <name type="scientific">Acinetobacter baumannii (strain ACICU)</name>
    <dbReference type="NCBI Taxonomy" id="405416"/>
    <lineage>
        <taxon>Bacteria</taxon>
        <taxon>Pseudomonadati</taxon>
        <taxon>Pseudomonadota</taxon>
        <taxon>Gammaproteobacteria</taxon>
        <taxon>Moraxellales</taxon>
        <taxon>Moraxellaceae</taxon>
        <taxon>Acinetobacter</taxon>
        <taxon>Acinetobacter calcoaceticus/baumannii complex</taxon>
    </lineage>
</organism>
<dbReference type="EMBL" id="CP000863">
    <property type="protein sequence ID" value="ACC55660.1"/>
    <property type="molecule type" value="Genomic_DNA"/>
</dbReference>
<dbReference type="RefSeq" id="WP_000777730.1">
    <property type="nucleotide sequence ID" value="NZ_CP031380.1"/>
</dbReference>
<dbReference type="SMR" id="B2I2M5"/>
<dbReference type="GeneID" id="92892329"/>
<dbReference type="KEGG" id="abc:ACICU_00348"/>
<dbReference type="HOGENOM" id="CLU_070525_1_1_6"/>
<dbReference type="Proteomes" id="UP000008839">
    <property type="component" value="Chromosome"/>
</dbReference>
<dbReference type="GO" id="GO:0005829">
    <property type="term" value="C:cytosol"/>
    <property type="evidence" value="ECO:0007669"/>
    <property type="project" value="TreeGrafter"/>
</dbReference>
<dbReference type="GO" id="GO:0000028">
    <property type="term" value="P:ribosomal small subunit assembly"/>
    <property type="evidence" value="ECO:0007669"/>
    <property type="project" value="TreeGrafter"/>
</dbReference>
<dbReference type="GO" id="GO:0006412">
    <property type="term" value="P:translation"/>
    <property type="evidence" value="ECO:0007669"/>
    <property type="project" value="TreeGrafter"/>
</dbReference>
<dbReference type="CDD" id="cd01734">
    <property type="entry name" value="YlxS_C"/>
    <property type="match status" value="1"/>
</dbReference>
<dbReference type="FunFam" id="3.30.300.70:FF:000001">
    <property type="entry name" value="Ribosome maturation factor RimP"/>
    <property type="match status" value="1"/>
</dbReference>
<dbReference type="Gene3D" id="2.30.30.180">
    <property type="entry name" value="Ribosome maturation factor RimP, C-terminal domain"/>
    <property type="match status" value="1"/>
</dbReference>
<dbReference type="Gene3D" id="3.30.300.70">
    <property type="entry name" value="RimP-like superfamily, N-terminal"/>
    <property type="match status" value="1"/>
</dbReference>
<dbReference type="HAMAP" id="MF_01077">
    <property type="entry name" value="RimP"/>
    <property type="match status" value="1"/>
</dbReference>
<dbReference type="InterPro" id="IPR003728">
    <property type="entry name" value="Ribosome_maturation_RimP"/>
</dbReference>
<dbReference type="InterPro" id="IPR028998">
    <property type="entry name" value="RimP_C"/>
</dbReference>
<dbReference type="InterPro" id="IPR036847">
    <property type="entry name" value="RimP_C_sf"/>
</dbReference>
<dbReference type="InterPro" id="IPR028989">
    <property type="entry name" value="RimP_N"/>
</dbReference>
<dbReference type="InterPro" id="IPR035956">
    <property type="entry name" value="RimP_N_sf"/>
</dbReference>
<dbReference type="NCBIfam" id="NF011224">
    <property type="entry name" value="PRK14631.1"/>
    <property type="match status" value="1"/>
</dbReference>
<dbReference type="PANTHER" id="PTHR33867">
    <property type="entry name" value="RIBOSOME MATURATION FACTOR RIMP"/>
    <property type="match status" value="1"/>
</dbReference>
<dbReference type="PANTHER" id="PTHR33867:SF1">
    <property type="entry name" value="RIBOSOME MATURATION FACTOR RIMP"/>
    <property type="match status" value="1"/>
</dbReference>
<dbReference type="Pfam" id="PF17384">
    <property type="entry name" value="DUF150_C"/>
    <property type="match status" value="1"/>
</dbReference>
<dbReference type="Pfam" id="PF02576">
    <property type="entry name" value="RimP_N"/>
    <property type="match status" value="1"/>
</dbReference>
<dbReference type="SUPFAM" id="SSF74942">
    <property type="entry name" value="YhbC-like, C-terminal domain"/>
    <property type="match status" value="1"/>
</dbReference>
<dbReference type="SUPFAM" id="SSF75420">
    <property type="entry name" value="YhbC-like, N-terminal domain"/>
    <property type="match status" value="1"/>
</dbReference>
<comment type="function">
    <text evidence="1">Required for maturation of 30S ribosomal subunits.</text>
</comment>
<comment type="subcellular location">
    <subcellularLocation>
        <location evidence="1">Cytoplasm</location>
    </subcellularLocation>
</comment>
<comment type="similarity">
    <text evidence="1">Belongs to the RimP family.</text>
</comment>
<proteinExistence type="inferred from homology"/>
<protein>
    <recommendedName>
        <fullName evidence="1">Ribosome maturation factor RimP</fullName>
    </recommendedName>
</protein>
<reference key="1">
    <citation type="journal article" date="2008" name="Antimicrob. Agents Chemother.">
        <title>Whole-genome pyrosequencing of an epidemic multidrug-resistant Acinetobacter baumannii strain belonging to the European clone II group.</title>
        <authorList>
            <person name="Iacono M."/>
            <person name="Villa L."/>
            <person name="Fortini D."/>
            <person name="Bordoni R."/>
            <person name="Imperi F."/>
            <person name="Bonnal R.J."/>
            <person name="Sicheritz-Ponten T."/>
            <person name="De Bellis G."/>
            <person name="Visca P."/>
            <person name="Cassone A."/>
            <person name="Carattoli A."/>
        </authorList>
    </citation>
    <scope>NUCLEOTIDE SEQUENCE [LARGE SCALE GENOMIC DNA]</scope>
    <source>
        <strain>ACICU</strain>
    </source>
</reference>
<name>RIMP_ACIBC</name>
<keyword id="KW-0963">Cytoplasm</keyword>
<keyword id="KW-0690">Ribosome biogenesis</keyword>
<gene>
    <name evidence="1" type="primary">rimP</name>
    <name type="ordered locus">ACICU_00348</name>
</gene>
<sequence>MKLSNKSQALYDMIAPAVEACGVDLWGIEFLPQGKRSLLRIYIDRPVDENAEPVINEDGEVEQGRGIGVEDCVRVTQQVGAMLDVHDPISGEYALEVSSPGWDRPFFQLEQLQGYIGQQVALRLIAAVENRRKFQAKLLAVDLENEEIQVEVEGKHVLDIDSNNIDKANLIYQD</sequence>